<feature type="chain" id="PRO_0000216984" description="UPF0297 protein SERP1181">
    <location>
        <begin position="1"/>
        <end position="86"/>
    </location>
</feature>
<dbReference type="EMBL" id="CP000029">
    <property type="protein sequence ID" value="AAW54546.1"/>
    <property type="molecule type" value="Genomic_DNA"/>
</dbReference>
<dbReference type="RefSeq" id="WP_001830883.1">
    <property type="nucleotide sequence ID" value="NC_002976.3"/>
</dbReference>
<dbReference type="SMR" id="Q5HNT3"/>
<dbReference type="STRING" id="176279.SERP1181"/>
<dbReference type="KEGG" id="ser:SERP1181"/>
<dbReference type="eggNOG" id="COG4472">
    <property type="taxonomic scope" value="Bacteria"/>
</dbReference>
<dbReference type="HOGENOM" id="CLU_162466_0_0_9"/>
<dbReference type="Proteomes" id="UP000000531">
    <property type="component" value="Chromosome"/>
</dbReference>
<dbReference type="HAMAP" id="MF_01507">
    <property type="entry name" value="UPF0297"/>
    <property type="match status" value="1"/>
</dbReference>
<dbReference type="InterPro" id="IPR009309">
    <property type="entry name" value="IreB"/>
</dbReference>
<dbReference type="NCBIfam" id="NF003997">
    <property type="entry name" value="PRK05473.1"/>
    <property type="match status" value="1"/>
</dbReference>
<dbReference type="PANTHER" id="PTHR40067">
    <property type="entry name" value="UPF0297 PROTEIN YRZL"/>
    <property type="match status" value="1"/>
</dbReference>
<dbReference type="PANTHER" id="PTHR40067:SF1">
    <property type="entry name" value="UPF0297 PROTEIN YRZL"/>
    <property type="match status" value="1"/>
</dbReference>
<dbReference type="Pfam" id="PF06135">
    <property type="entry name" value="IreB"/>
    <property type="match status" value="1"/>
</dbReference>
<dbReference type="PIRSF" id="PIRSF037258">
    <property type="entry name" value="DUF965_bac"/>
    <property type="match status" value="1"/>
</dbReference>
<proteinExistence type="inferred from homology"/>
<comment type="similarity">
    <text evidence="1">Belongs to the UPF0297 family.</text>
</comment>
<name>Y1181_STAEQ</name>
<accession>Q5HNT3</accession>
<reference key="1">
    <citation type="journal article" date="2005" name="J. Bacteriol.">
        <title>Insights on evolution of virulence and resistance from the complete genome analysis of an early methicillin-resistant Staphylococcus aureus strain and a biofilm-producing methicillin-resistant Staphylococcus epidermidis strain.</title>
        <authorList>
            <person name="Gill S.R."/>
            <person name="Fouts D.E."/>
            <person name="Archer G.L."/>
            <person name="Mongodin E.F."/>
            <person name="DeBoy R.T."/>
            <person name="Ravel J."/>
            <person name="Paulsen I.T."/>
            <person name="Kolonay J.F."/>
            <person name="Brinkac L.M."/>
            <person name="Beanan M.J."/>
            <person name="Dodson R.J."/>
            <person name="Daugherty S.C."/>
            <person name="Madupu R."/>
            <person name="Angiuoli S.V."/>
            <person name="Durkin A.S."/>
            <person name="Haft D.H."/>
            <person name="Vamathevan J.J."/>
            <person name="Khouri H."/>
            <person name="Utterback T.R."/>
            <person name="Lee C."/>
            <person name="Dimitrov G."/>
            <person name="Jiang L."/>
            <person name="Qin H."/>
            <person name="Weidman J."/>
            <person name="Tran K."/>
            <person name="Kang K.H."/>
            <person name="Hance I.R."/>
            <person name="Nelson K.E."/>
            <person name="Fraser C.M."/>
        </authorList>
    </citation>
    <scope>NUCLEOTIDE SEQUENCE [LARGE SCALE GENOMIC DNA]</scope>
    <source>
        <strain>ATCC 35984 / DSM 28319 / BCRC 17069 / CCUG 31568 / BM 3577 / RP62A</strain>
    </source>
</reference>
<evidence type="ECO:0000255" key="1">
    <source>
        <dbReference type="HAMAP-Rule" id="MF_01507"/>
    </source>
</evidence>
<gene>
    <name type="ordered locus">SERP1181</name>
</gene>
<sequence>MENFDKTMKFSYEEIPKEDVKSVLQNVHRTLEERGYNAVNQIVGYLLSGDPAYIPRQNEARNQIRHIDRDVIMEELVSNYLKESKN</sequence>
<organism>
    <name type="scientific">Staphylococcus epidermidis (strain ATCC 35984 / DSM 28319 / BCRC 17069 / CCUG 31568 / BM 3577 / RP62A)</name>
    <dbReference type="NCBI Taxonomy" id="176279"/>
    <lineage>
        <taxon>Bacteria</taxon>
        <taxon>Bacillati</taxon>
        <taxon>Bacillota</taxon>
        <taxon>Bacilli</taxon>
        <taxon>Bacillales</taxon>
        <taxon>Staphylococcaceae</taxon>
        <taxon>Staphylococcus</taxon>
    </lineage>
</organism>
<protein>
    <recommendedName>
        <fullName evidence="1">UPF0297 protein SERP1181</fullName>
    </recommendedName>
</protein>
<keyword id="KW-1185">Reference proteome</keyword>